<name>DAN4_YEAST</name>
<dbReference type="EMBL" id="Z49651">
    <property type="protein sequence ID" value="CAA89684.1"/>
    <property type="molecule type" value="Genomic_DNA"/>
</dbReference>
<dbReference type="EMBL" id="BK006943">
    <property type="protein sequence ID" value="DAA08935.1"/>
    <property type="molecule type" value="Genomic_DNA"/>
</dbReference>
<dbReference type="PIR" id="S57180">
    <property type="entry name" value="S57180"/>
</dbReference>
<dbReference type="RefSeq" id="NP_012685.1">
    <property type="nucleotide sequence ID" value="NM_001181809.2"/>
</dbReference>
<dbReference type="BioGRID" id="33906">
    <property type="interactions" value="81"/>
</dbReference>
<dbReference type="FunCoup" id="P47179">
    <property type="interactions" value="49"/>
</dbReference>
<dbReference type="STRING" id="4932.YJR151C"/>
<dbReference type="GlyGen" id="P47179">
    <property type="glycosylation" value="1 site"/>
</dbReference>
<dbReference type="PaxDb" id="4932-YJR151C"/>
<dbReference type="EnsemblFungi" id="YJR151C_mRNA">
    <property type="protein sequence ID" value="YJR151C"/>
    <property type="gene ID" value="YJR151C"/>
</dbReference>
<dbReference type="GeneID" id="853616"/>
<dbReference type="KEGG" id="sce:YJR151C"/>
<dbReference type="AGR" id="SGD:S000003912"/>
<dbReference type="SGD" id="S000003912">
    <property type="gene designation" value="DAN4"/>
</dbReference>
<dbReference type="VEuPathDB" id="FungiDB:YJR151C"/>
<dbReference type="eggNOG" id="ENOG502S6R6">
    <property type="taxonomic scope" value="Eukaryota"/>
</dbReference>
<dbReference type="GeneTree" id="ENSGT00940000176276"/>
<dbReference type="HOGENOM" id="CLU_277742_0_0_1"/>
<dbReference type="InParanoid" id="P47179"/>
<dbReference type="OMA" id="PPEIPDC"/>
<dbReference type="OrthoDB" id="4070013at2759"/>
<dbReference type="BioCyc" id="YEAST:G3O-31764-MONOMER"/>
<dbReference type="BioGRID-ORCS" id="853616">
    <property type="hits" value="0 hits in 10 CRISPR screens"/>
</dbReference>
<dbReference type="PRO" id="PR:P47179"/>
<dbReference type="Proteomes" id="UP000002311">
    <property type="component" value="Chromosome X"/>
</dbReference>
<dbReference type="RNAct" id="P47179">
    <property type="molecule type" value="protein"/>
</dbReference>
<dbReference type="GO" id="GO:0071944">
    <property type="term" value="C:cell periphery"/>
    <property type="evidence" value="ECO:0007005"/>
    <property type="project" value="SGD"/>
</dbReference>
<dbReference type="GO" id="GO:0005576">
    <property type="term" value="C:extracellular region"/>
    <property type="evidence" value="ECO:0007669"/>
    <property type="project" value="UniProtKB-KW"/>
</dbReference>
<dbReference type="GO" id="GO:0009277">
    <property type="term" value="C:fungal-type cell wall"/>
    <property type="evidence" value="ECO:0000314"/>
    <property type="project" value="SGD"/>
</dbReference>
<dbReference type="GO" id="GO:0005886">
    <property type="term" value="C:plasma membrane"/>
    <property type="evidence" value="ECO:0007669"/>
    <property type="project" value="UniProtKB-SubCell"/>
</dbReference>
<dbReference type="GO" id="GO:0098552">
    <property type="term" value="C:side of membrane"/>
    <property type="evidence" value="ECO:0007669"/>
    <property type="project" value="UniProtKB-KW"/>
</dbReference>
<dbReference type="GO" id="GO:0005199">
    <property type="term" value="F:structural constituent of cell wall"/>
    <property type="evidence" value="ECO:0000318"/>
    <property type="project" value="GO_Central"/>
</dbReference>
<dbReference type="GO" id="GO:0031505">
    <property type="term" value="P:fungal-type cell wall organization"/>
    <property type="evidence" value="ECO:0000318"/>
    <property type="project" value="GO_Central"/>
</dbReference>
<dbReference type="InterPro" id="IPR000992">
    <property type="entry name" value="SRP1_TIP1"/>
</dbReference>
<dbReference type="InterPro" id="IPR050788">
    <property type="entry name" value="Yeast_SRP1/TIP1_CWP"/>
</dbReference>
<dbReference type="PANTHER" id="PTHR31002:SF34">
    <property type="entry name" value="CELL WALL PROTEIN CWP1-RELATED"/>
    <property type="match status" value="1"/>
</dbReference>
<dbReference type="PANTHER" id="PTHR31002">
    <property type="entry name" value="SERIPAUPERIN"/>
    <property type="match status" value="1"/>
</dbReference>
<dbReference type="Pfam" id="PF00660">
    <property type="entry name" value="SRP1_TIP1"/>
    <property type="match status" value="1"/>
</dbReference>
<dbReference type="PROSITE" id="PS00724">
    <property type="entry name" value="SRP1_TIP1"/>
    <property type="match status" value="1"/>
</dbReference>
<sequence>MVNISIVAGIVALATSAAAITATTTLSPYDERVNLIELAVYVSDIRAHIFQYYSFRNHHKTETYPSEIAAAVFDYGDFTTRLTGISGDEVTRMITGVPWYSTRLKPAISSALSKDGIYTAIPTSTSTTTTKSSTSTTPTTTITSTTSTTSTTPTTSTTSTTPTTSTTSTTPTTSTTSTTPTTSTTSTTPTTSTTSTTPTTSTTSTTPTTSTTSTTPTTSTTSTTPTTSTTPTTSTTSTTSQTSTKSTTPTTSSTSTTPTTSTTPTTSTTSTAPTTSTTSTTSTTSTISTAPTTSTTSSTFSTSSASASSVISTTATTSTTFASLTTPATSTASTDHTTSSVSTTNAFTTSATTTTTSDTYISSSSPSQVTSSAEPTTVSEVTSSVEPTRSSQVTSSAEPTTVSEFTSSVEPTRSSQVTSSAEPTTVSEFTSSVEPTRSSQVTSSAEPTTVSEFTSSVEPTRSSQVTSSAEPTTVSEFTSSVEPTRSSQVTSSAEPTTVSEFTSSVEPIRSSQVTSSAEPTTVSEVTSSVEPIRSSQVTTTEPVSSFGSTFSEITSSAEPLSFSKATTSAESISSNQITISSELIVSSVITSSSEIPSSIEVLTSSGISSSVEPTSLVGPSSDESISSTESLSATSTFTSAVVSSSKAADFFTRSTVSAKSDVSGNSSTQSTTFFATPSTPLAVSSTVVTSSTDSVSPNIPFSEISSSPESSTAITSTSTSFIAERTSSLYLSSSNMSSFTLSTFTVSQSIVSSFSMEPTSSVASFASSSPLLVSSRSNCSDARSSNTISSGLFSTIENVRNATSTFTNLSTDEIVITSCKSSCTNEDSVLTKTQVSTVETTITSCSGGICTTLMSPVTTINAKANTLTTTETSTVETTITTCPGGVCSTLTVPVTTITSEATTTATISCEDNEEDITSTETELLTLETTITSCSGGICTTLMSPVTTINAKANTLTTTETSTVETTITTCSGGVCSTLTVPVTTITSEATTTATISCEDNEEDVASTKTELLTMETTITSCSGGICTTLMSPVSSFNSKATTSNNAESTIPKAIKVSCSAGACTTLTTVDAGISMFTRTGLSITQTTVTNCSGGTCTMLTAPIATATSKVISPIPKASSATSIAHSSASYTVSINTNGAYNFDKDNIFGTAIVAVVALLLL</sequence>
<proteinExistence type="evidence at transcript level"/>
<reference key="1">
    <citation type="journal article" date="1996" name="EMBO J.">
        <title>Complete nucleotide sequence of Saccharomyces cerevisiae chromosome X.</title>
        <authorList>
            <person name="Galibert F."/>
            <person name="Alexandraki D."/>
            <person name="Baur A."/>
            <person name="Boles E."/>
            <person name="Chalwatzis N."/>
            <person name="Chuat J.-C."/>
            <person name="Coster F."/>
            <person name="Cziepluch C."/>
            <person name="de Haan M."/>
            <person name="Domdey H."/>
            <person name="Durand P."/>
            <person name="Entian K.-D."/>
            <person name="Gatius M."/>
            <person name="Goffeau A."/>
            <person name="Grivell L.A."/>
            <person name="Hennemann A."/>
            <person name="Herbert C.J."/>
            <person name="Heumann K."/>
            <person name="Hilger F."/>
            <person name="Hollenberg C.P."/>
            <person name="Huang M.-E."/>
            <person name="Jacq C."/>
            <person name="Jauniaux J.-C."/>
            <person name="Katsoulou C."/>
            <person name="Kirchrath L."/>
            <person name="Kleine K."/>
            <person name="Kordes E."/>
            <person name="Koetter P."/>
            <person name="Liebl S."/>
            <person name="Louis E.J."/>
            <person name="Manus V."/>
            <person name="Mewes H.-W."/>
            <person name="Miosga T."/>
            <person name="Obermaier B."/>
            <person name="Perea J."/>
            <person name="Pohl T.M."/>
            <person name="Portetelle D."/>
            <person name="Pujol A."/>
            <person name="Purnelle B."/>
            <person name="Ramezani Rad M."/>
            <person name="Rasmussen S.W."/>
            <person name="Rose M."/>
            <person name="Rossau R."/>
            <person name="Schaaff-Gerstenschlaeger I."/>
            <person name="Smits P.H.M."/>
            <person name="Scarcez T."/>
            <person name="Soriano N."/>
            <person name="To Van D."/>
            <person name="Tzermia M."/>
            <person name="Van Broekhoven A."/>
            <person name="Vandenbol M."/>
            <person name="Wedler H."/>
            <person name="von Wettstein D."/>
            <person name="Wambutt R."/>
            <person name="Zagulski M."/>
            <person name="Zollner A."/>
            <person name="Karpfinger-Hartl L."/>
        </authorList>
    </citation>
    <scope>NUCLEOTIDE SEQUENCE [LARGE SCALE GENOMIC DNA]</scope>
    <source>
        <strain>ATCC 204508 / S288c</strain>
    </source>
</reference>
<reference key="2">
    <citation type="journal article" date="2014" name="G3 (Bethesda)">
        <title>The reference genome sequence of Saccharomyces cerevisiae: Then and now.</title>
        <authorList>
            <person name="Engel S.R."/>
            <person name="Dietrich F.S."/>
            <person name="Fisk D.G."/>
            <person name="Binkley G."/>
            <person name="Balakrishnan R."/>
            <person name="Costanzo M.C."/>
            <person name="Dwight S.S."/>
            <person name="Hitz B.C."/>
            <person name="Karra K."/>
            <person name="Nash R.S."/>
            <person name="Weng S."/>
            <person name="Wong E.D."/>
            <person name="Lloyd P."/>
            <person name="Skrzypek M.S."/>
            <person name="Miyasato S.R."/>
            <person name="Simison M."/>
            <person name="Cherry J.M."/>
        </authorList>
    </citation>
    <scope>GENOME REANNOTATION</scope>
    <source>
        <strain>ATCC 204508 / S288c</strain>
    </source>
</reference>
<reference key="3">
    <citation type="journal article" date="1998" name="Mol. Gen. Genet.">
        <title>Screening for glycosylphosphatidylinositol (GPI)-dependent cell wall proteins in Saccharomyces cerevisiae.</title>
        <authorList>
            <person name="Hamada K."/>
            <person name="Fukuchi S."/>
            <person name="Arisawa M."/>
            <person name="Baba M."/>
            <person name="Kitada K."/>
        </authorList>
    </citation>
    <scope>SUBCELLULAR LOCATION</scope>
</reference>
<reference key="4">
    <citation type="journal article" date="2001" name="J. Bacteriol.">
        <title>Reciprocal regulation of anaerobic and aerobic cell wall mannoprotein gene expression in Saccharomyces cerevisiae.</title>
        <authorList>
            <person name="Abramova N.E."/>
            <person name="Sertil O."/>
            <person name="Mehta S."/>
            <person name="Lowry C.V."/>
        </authorList>
    </citation>
    <scope>INDUCTION</scope>
</reference>
<reference key="5">
    <citation type="journal article" date="2001" name="Nucleic Acids Res.">
        <title>Induction and repression of DAN1 and the family of anaerobic mannoprotein genes in Saccharomyces cerevisiae occurs through a complex array of regulatory sites.</title>
        <authorList>
            <person name="Cohen B.D."/>
            <person name="Sertil O."/>
            <person name="Abramova N.E."/>
            <person name="Davies K.J.A."/>
            <person name="Lowry C.V."/>
        </authorList>
    </citation>
    <scope>INDUCTION</scope>
</reference>
<reference key="6">
    <citation type="journal article" date="2005" name="Nat. Genet.">
        <title>Intragenic tandem repeats generate functional variability.</title>
        <authorList>
            <person name="Verstrepen K.J."/>
            <person name="Jansen A."/>
            <person name="Lewitter F."/>
            <person name="Fink G.R."/>
        </authorList>
    </citation>
    <scope>REPEATS</scope>
</reference>
<evidence type="ECO:0000255" key="1"/>
<evidence type="ECO:0000256" key="2">
    <source>
        <dbReference type="SAM" id="MobiDB-lite"/>
    </source>
</evidence>
<evidence type="ECO:0000269" key="3">
    <source>
    </source>
</evidence>
<evidence type="ECO:0000269" key="4">
    <source>
    </source>
</evidence>
<evidence type="ECO:0000269" key="5">
    <source>
    </source>
</evidence>
<evidence type="ECO:0000303" key="6">
    <source>
    </source>
</evidence>
<evidence type="ECO:0000305" key="7"/>
<evidence type="ECO:0000305" key="8">
    <source>
    </source>
</evidence>
<evidence type="ECO:0000305" key="9">
    <source>
    </source>
</evidence>
<evidence type="ECO:0000312" key="10">
    <source>
        <dbReference type="SGD" id="S000003912"/>
    </source>
</evidence>
<protein>
    <recommendedName>
        <fullName evidence="7">Cell wall protein DAN4</fullName>
    </recommendedName>
    <alternativeName>
        <fullName evidence="6">Delayed anaerobic protein 4</fullName>
    </alternativeName>
</protein>
<organism>
    <name type="scientific">Saccharomyces cerevisiae (strain ATCC 204508 / S288c)</name>
    <name type="common">Baker's yeast</name>
    <dbReference type="NCBI Taxonomy" id="559292"/>
    <lineage>
        <taxon>Eukaryota</taxon>
        <taxon>Fungi</taxon>
        <taxon>Dikarya</taxon>
        <taxon>Ascomycota</taxon>
        <taxon>Saccharomycotina</taxon>
        <taxon>Saccharomycetes</taxon>
        <taxon>Saccharomycetales</taxon>
        <taxon>Saccharomycetaceae</taxon>
        <taxon>Saccharomyces</taxon>
    </lineage>
</organism>
<keyword id="KW-1003">Cell membrane</keyword>
<keyword id="KW-0134">Cell wall</keyword>
<keyword id="KW-0325">Glycoprotein</keyword>
<keyword id="KW-0336">GPI-anchor</keyword>
<keyword id="KW-0449">Lipoprotein</keyword>
<keyword id="KW-0472">Membrane</keyword>
<keyword id="KW-1185">Reference proteome</keyword>
<keyword id="KW-0677">Repeat</keyword>
<keyword id="KW-0964">Secreted</keyword>
<keyword id="KW-0732">Signal</keyword>
<gene>
    <name evidence="6" type="primary">DAN4</name>
    <name evidence="10" type="ordered locus">YJR151C</name>
    <name evidence="10" type="ORF">J2223</name>
</gene>
<accession>P47179</accession>
<accession>D6VWW9</accession>
<feature type="signal peptide" evidence="1">
    <location>
        <begin position="1"/>
        <end position="19"/>
    </location>
</feature>
<feature type="chain" id="PRO_0000033243" description="Cell wall protein DAN4">
    <location>
        <begin position="20"/>
        <end position="1137"/>
    </location>
</feature>
<feature type="propeptide" id="PRO_0000033244" description="Removed in mature form" evidence="1">
    <location>
        <begin position="1138"/>
        <end position="1161"/>
    </location>
</feature>
<feature type="repeat" description="1-1" evidence="5">
    <location>
        <begin position="373"/>
        <end position="384"/>
    </location>
</feature>
<feature type="repeat" description="1-2" evidence="5">
    <location>
        <begin position="385"/>
        <end position="396"/>
    </location>
</feature>
<feature type="repeat" description="1-3" evidence="5">
    <location>
        <begin position="397"/>
        <end position="408"/>
    </location>
</feature>
<feature type="repeat" description="1-4" evidence="5">
    <location>
        <begin position="409"/>
        <end position="420"/>
    </location>
</feature>
<feature type="repeat" description="1-5" evidence="5">
    <location>
        <begin position="421"/>
        <end position="432"/>
    </location>
</feature>
<feature type="repeat" description="1-6" evidence="5">
    <location>
        <begin position="433"/>
        <end position="444"/>
    </location>
</feature>
<feature type="repeat" description="1-7" evidence="5">
    <location>
        <begin position="445"/>
        <end position="456"/>
    </location>
</feature>
<feature type="repeat" description="1-8" evidence="5">
    <location>
        <begin position="457"/>
        <end position="468"/>
    </location>
</feature>
<feature type="repeat" description="1-9" evidence="5">
    <location>
        <begin position="469"/>
        <end position="480"/>
    </location>
</feature>
<feature type="repeat" description="1-10" evidence="5">
    <location>
        <begin position="481"/>
        <end position="492"/>
    </location>
</feature>
<feature type="repeat" description="1-11" evidence="5">
    <location>
        <begin position="493"/>
        <end position="504"/>
    </location>
</feature>
<feature type="repeat" description="1-12" evidence="5">
    <location>
        <begin position="505"/>
        <end position="516"/>
    </location>
</feature>
<feature type="repeat" description="1-13" evidence="5">
    <location>
        <begin position="517"/>
        <end position="528"/>
    </location>
</feature>
<feature type="repeat" description="1-14" evidence="5">
    <location>
        <begin position="529"/>
        <end position="540"/>
    </location>
</feature>
<feature type="repeat" description="2-1" evidence="5">
    <location>
        <begin position="826"/>
        <end position="913"/>
    </location>
</feature>
<feature type="repeat" description="2-2" evidence="5">
    <location>
        <begin position="914"/>
        <end position="1001"/>
    </location>
</feature>
<feature type="repeat" description="2-3; truncated" evidence="5">
    <location>
        <begin position="1002"/>
        <end position="1040"/>
    </location>
</feature>
<feature type="region of interest" description="Disordered" evidence="2">
    <location>
        <begin position="123"/>
        <end position="309"/>
    </location>
</feature>
<feature type="region of interest" description="46 X 3 AA tandem repeats of T-[SP]-T">
    <location>
        <begin position="134"/>
        <end position="286"/>
    </location>
</feature>
<feature type="region of interest" description="Disordered" evidence="2">
    <location>
        <begin position="326"/>
        <end position="345"/>
    </location>
</feature>
<feature type="region of interest" description="Disordered" evidence="2">
    <location>
        <begin position="354"/>
        <end position="547"/>
    </location>
</feature>
<feature type="region of interest" description="14 X 12 AA approximate tandem repeats">
    <location>
        <begin position="373"/>
        <end position="540"/>
    </location>
</feature>
<feature type="region of interest" description="Disordered" evidence="2">
    <location>
        <begin position="691"/>
        <end position="713"/>
    </location>
</feature>
<feature type="region of interest" description="2.5 X 88 AA approximate tandem repeats">
    <location>
        <begin position="826"/>
        <end position="1040"/>
    </location>
</feature>
<feature type="compositionally biased region" description="Low complexity" evidence="2">
    <location>
        <begin position="354"/>
        <end position="372"/>
    </location>
</feature>
<feature type="compositionally biased region" description="Polar residues" evidence="2">
    <location>
        <begin position="373"/>
        <end position="547"/>
    </location>
</feature>
<feature type="lipid moiety-binding region" description="GPI-anchor amidated asparagine" evidence="1">
    <location>
        <position position="1137"/>
    </location>
</feature>
<comment type="function">
    <text evidence="8 9">Component of the cell wall.</text>
</comment>
<comment type="subcellular location">
    <subcellularLocation>
        <location evidence="9">Secreted</location>
        <location evidence="9">Cell wall</location>
    </subcellularLocation>
    <subcellularLocation>
        <location evidence="1">Cell membrane</location>
        <topology evidence="1">Lipid-anchor</topology>
        <topology evidence="1">GPI-anchor</topology>
    </subcellularLocation>
</comment>
<comment type="induction">
    <text evidence="3 4">Induced during anaerobic growth and completely repressed during aerobic growth.</text>
</comment>
<comment type="domain">
    <text evidence="5">The number of the intragenic tandem repeats varies between different S.cerevisiae strains.</text>
</comment>
<comment type="PTM">
    <text evidence="7">Extensively O-glycosylated.</text>
</comment>
<comment type="PTM">
    <text evidence="7">The GPI-anchor is attached to the protein in the endoplasmic reticulum and serves to target the protein to the cell surface. There, the glucosamine-inositol phospholipid moiety is cleaved off and the GPI-modified mannoprotein is covalently attached via its lipidless GPI glycan remnant to the 1,6-beta-glucan of the outer cell wall layer.</text>
</comment>
<comment type="similarity">
    <text evidence="7">Belongs to the SRP1/TIP1 family.</text>
</comment>